<organism>
    <name type="scientific">Salmonella heidelberg (strain SL476)</name>
    <dbReference type="NCBI Taxonomy" id="454169"/>
    <lineage>
        <taxon>Bacteria</taxon>
        <taxon>Pseudomonadati</taxon>
        <taxon>Pseudomonadota</taxon>
        <taxon>Gammaproteobacteria</taxon>
        <taxon>Enterobacterales</taxon>
        <taxon>Enterobacteriaceae</taxon>
        <taxon>Salmonella</taxon>
    </lineage>
</organism>
<dbReference type="EMBL" id="CP001120">
    <property type="protein sequence ID" value="ACF69795.1"/>
    <property type="molecule type" value="Genomic_DNA"/>
</dbReference>
<dbReference type="RefSeq" id="WP_001138042.1">
    <property type="nucleotide sequence ID" value="NC_011083.1"/>
</dbReference>
<dbReference type="SMR" id="B4TKM2"/>
<dbReference type="GeneID" id="92804583"/>
<dbReference type="KEGG" id="seh:SeHA_C3752"/>
<dbReference type="HOGENOM" id="CLU_072226_1_1_6"/>
<dbReference type="Proteomes" id="UP000001866">
    <property type="component" value="Chromosome"/>
</dbReference>
<dbReference type="GO" id="GO:0015935">
    <property type="term" value="C:small ribosomal subunit"/>
    <property type="evidence" value="ECO:0007669"/>
    <property type="project" value="InterPro"/>
</dbReference>
<dbReference type="GO" id="GO:0019843">
    <property type="term" value="F:rRNA binding"/>
    <property type="evidence" value="ECO:0007669"/>
    <property type="project" value="UniProtKB-UniRule"/>
</dbReference>
<dbReference type="GO" id="GO:0003735">
    <property type="term" value="F:structural constituent of ribosome"/>
    <property type="evidence" value="ECO:0007669"/>
    <property type="project" value="InterPro"/>
</dbReference>
<dbReference type="GO" id="GO:0000049">
    <property type="term" value="F:tRNA binding"/>
    <property type="evidence" value="ECO:0007669"/>
    <property type="project" value="UniProtKB-UniRule"/>
</dbReference>
<dbReference type="GO" id="GO:0006412">
    <property type="term" value="P:translation"/>
    <property type="evidence" value="ECO:0007669"/>
    <property type="project" value="UniProtKB-UniRule"/>
</dbReference>
<dbReference type="CDD" id="cd14869">
    <property type="entry name" value="uS7_Bacteria"/>
    <property type="match status" value="1"/>
</dbReference>
<dbReference type="FunFam" id="1.10.455.10:FF:000001">
    <property type="entry name" value="30S ribosomal protein S7"/>
    <property type="match status" value="1"/>
</dbReference>
<dbReference type="Gene3D" id="1.10.455.10">
    <property type="entry name" value="Ribosomal protein S7 domain"/>
    <property type="match status" value="1"/>
</dbReference>
<dbReference type="HAMAP" id="MF_00480_B">
    <property type="entry name" value="Ribosomal_uS7_B"/>
    <property type="match status" value="1"/>
</dbReference>
<dbReference type="InterPro" id="IPR000235">
    <property type="entry name" value="Ribosomal_uS7"/>
</dbReference>
<dbReference type="InterPro" id="IPR005717">
    <property type="entry name" value="Ribosomal_uS7_bac/org-type"/>
</dbReference>
<dbReference type="InterPro" id="IPR020606">
    <property type="entry name" value="Ribosomal_uS7_CS"/>
</dbReference>
<dbReference type="InterPro" id="IPR023798">
    <property type="entry name" value="Ribosomal_uS7_dom"/>
</dbReference>
<dbReference type="InterPro" id="IPR036823">
    <property type="entry name" value="Ribosomal_uS7_dom_sf"/>
</dbReference>
<dbReference type="NCBIfam" id="TIGR01029">
    <property type="entry name" value="rpsG_bact"/>
    <property type="match status" value="1"/>
</dbReference>
<dbReference type="PANTHER" id="PTHR11205">
    <property type="entry name" value="RIBOSOMAL PROTEIN S7"/>
    <property type="match status" value="1"/>
</dbReference>
<dbReference type="Pfam" id="PF00177">
    <property type="entry name" value="Ribosomal_S7"/>
    <property type="match status" value="1"/>
</dbReference>
<dbReference type="PIRSF" id="PIRSF002122">
    <property type="entry name" value="RPS7p_RPS7a_RPS5e_RPS7o"/>
    <property type="match status" value="1"/>
</dbReference>
<dbReference type="SUPFAM" id="SSF47973">
    <property type="entry name" value="Ribosomal protein S7"/>
    <property type="match status" value="1"/>
</dbReference>
<dbReference type="PROSITE" id="PS00052">
    <property type="entry name" value="RIBOSOMAL_S7"/>
    <property type="match status" value="1"/>
</dbReference>
<accession>B4TKM2</accession>
<proteinExistence type="inferred from homology"/>
<protein>
    <recommendedName>
        <fullName evidence="1">Small ribosomal subunit protein uS7</fullName>
    </recommendedName>
    <alternativeName>
        <fullName evidence="2">30S ribosomal protein S7</fullName>
    </alternativeName>
</protein>
<gene>
    <name evidence="1" type="primary">rpsG</name>
    <name type="ordered locus">SeHA_C3752</name>
</gene>
<keyword id="KW-0687">Ribonucleoprotein</keyword>
<keyword id="KW-0689">Ribosomal protein</keyword>
<keyword id="KW-0694">RNA-binding</keyword>
<keyword id="KW-0699">rRNA-binding</keyword>
<keyword id="KW-0820">tRNA-binding</keyword>
<name>RS7_SALHS</name>
<sequence>MPRRRVIGQRKILPDPKFGSELLAKFVNILMVDGKKSTAESIVYSALETLAQRSGKSELEAFEVALENVRPTVEVKSRRVGGSTYQVPVEVRPVRRNALAMRWIVEAARKRGDKSMALRLANELSDAADNKGTAVKKREDVHRMAEANKAFAHYRW</sequence>
<reference key="1">
    <citation type="journal article" date="2011" name="J. Bacteriol.">
        <title>Comparative genomics of 28 Salmonella enterica isolates: evidence for CRISPR-mediated adaptive sublineage evolution.</title>
        <authorList>
            <person name="Fricke W.F."/>
            <person name="Mammel M.K."/>
            <person name="McDermott P.F."/>
            <person name="Tartera C."/>
            <person name="White D.G."/>
            <person name="Leclerc J.E."/>
            <person name="Ravel J."/>
            <person name="Cebula T.A."/>
        </authorList>
    </citation>
    <scope>NUCLEOTIDE SEQUENCE [LARGE SCALE GENOMIC DNA]</scope>
    <source>
        <strain>SL476</strain>
    </source>
</reference>
<evidence type="ECO:0000255" key="1">
    <source>
        <dbReference type="HAMAP-Rule" id="MF_00480"/>
    </source>
</evidence>
<evidence type="ECO:0000305" key="2"/>
<feature type="chain" id="PRO_1000125997" description="Small ribosomal subunit protein uS7">
    <location>
        <begin position="1"/>
        <end position="156"/>
    </location>
</feature>
<comment type="function">
    <text evidence="1">One of the primary rRNA binding proteins, it binds directly to 16S rRNA where it nucleates assembly of the head domain of the 30S subunit. Is located at the subunit interface close to the decoding center, probably blocks exit of the E-site tRNA.</text>
</comment>
<comment type="subunit">
    <text evidence="1">Part of the 30S ribosomal subunit. Contacts proteins S9 and S11.</text>
</comment>
<comment type="similarity">
    <text evidence="1">Belongs to the universal ribosomal protein uS7 family.</text>
</comment>